<sequence>MSFESFGDFLAMGHHGPYVWSAYGISLLVLAINVAEPLLARRRYLQEEARRLRREAQQ</sequence>
<name>CCMD_PSEAE</name>
<gene>
    <name type="primary">ccmD</name>
    <name type="ordered locus">PA1478</name>
</gene>
<comment type="function">
    <text evidence="2">Required for the export of heme to the periplasm for the biogenesis of c-type cytochromes.</text>
</comment>
<comment type="subcellular location">
    <subcellularLocation>
        <location evidence="2">Cell inner membrane</location>
        <topology evidence="2">Single-pass membrane protein</topology>
    </subcellularLocation>
</comment>
<comment type="similarity">
    <text evidence="2">Belongs to the CcmD/CycX/HelD family.</text>
</comment>
<proteinExistence type="inferred from homology"/>
<keyword id="KW-0997">Cell inner membrane</keyword>
<keyword id="KW-1003">Cell membrane</keyword>
<keyword id="KW-0201">Cytochrome c-type biogenesis</keyword>
<keyword id="KW-0472">Membrane</keyword>
<keyword id="KW-1185">Reference proteome</keyword>
<keyword id="KW-0812">Transmembrane</keyword>
<keyword id="KW-1133">Transmembrane helix</keyword>
<keyword id="KW-0813">Transport</keyword>
<organism>
    <name type="scientific">Pseudomonas aeruginosa (strain ATCC 15692 / DSM 22644 / CIP 104116 / JCM 14847 / LMG 12228 / 1C / PRS 101 / PAO1)</name>
    <dbReference type="NCBI Taxonomy" id="208964"/>
    <lineage>
        <taxon>Bacteria</taxon>
        <taxon>Pseudomonadati</taxon>
        <taxon>Pseudomonadota</taxon>
        <taxon>Gammaproteobacteria</taxon>
        <taxon>Pseudomonadales</taxon>
        <taxon>Pseudomonadaceae</taxon>
        <taxon>Pseudomonas</taxon>
    </lineage>
</organism>
<evidence type="ECO:0000255" key="1"/>
<evidence type="ECO:0000305" key="2"/>
<accession>Q9I3N4</accession>
<dbReference type="EMBL" id="AE004091">
    <property type="protein sequence ID" value="AAG04867.1"/>
    <property type="molecule type" value="Genomic_DNA"/>
</dbReference>
<dbReference type="PIR" id="G83459">
    <property type="entry name" value="G83459"/>
</dbReference>
<dbReference type="RefSeq" id="NP_250169.1">
    <property type="nucleotide sequence ID" value="NC_002516.2"/>
</dbReference>
<dbReference type="RefSeq" id="WP_003083136.1">
    <property type="nucleotide sequence ID" value="NZ_QZGE01000005.1"/>
</dbReference>
<dbReference type="SMR" id="Q9I3N4"/>
<dbReference type="STRING" id="208964.PA1478"/>
<dbReference type="PaxDb" id="208964-PA1478"/>
<dbReference type="DNASU" id="880954"/>
<dbReference type="GeneID" id="77221902"/>
<dbReference type="GeneID" id="880954"/>
<dbReference type="KEGG" id="pae:PA1478"/>
<dbReference type="PATRIC" id="fig|208964.12.peg.1529"/>
<dbReference type="PseudoCAP" id="PA1478"/>
<dbReference type="HOGENOM" id="CLU_180892_4_1_6"/>
<dbReference type="InParanoid" id="Q9I3N4"/>
<dbReference type="OrthoDB" id="9815607at2"/>
<dbReference type="PhylomeDB" id="Q9I3N4"/>
<dbReference type="BioCyc" id="PAER208964:G1FZ6-1504-MONOMER"/>
<dbReference type="Proteomes" id="UP000002438">
    <property type="component" value="Chromosome"/>
</dbReference>
<dbReference type="GO" id="GO:0005886">
    <property type="term" value="C:plasma membrane"/>
    <property type="evidence" value="ECO:0007669"/>
    <property type="project" value="UniProtKB-SubCell"/>
</dbReference>
<dbReference type="GO" id="GO:1903607">
    <property type="term" value="P:cytochrome c biosynthetic process"/>
    <property type="evidence" value="ECO:0000318"/>
    <property type="project" value="GO_Central"/>
</dbReference>
<dbReference type="GO" id="GO:0017004">
    <property type="term" value="P:cytochrome complex assembly"/>
    <property type="evidence" value="ECO:0007669"/>
    <property type="project" value="UniProtKB-KW"/>
</dbReference>
<dbReference type="GO" id="GO:0015886">
    <property type="term" value="P:heme transport"/>
    <property type="evidence" value="ECO:0007669"/>
    <property type="project" value="InterPro"/>
</dbReference>
<dbReference type="InterPro" id="IPR007078">
    <property type="entry name" value="Haem_export_protD_CcmD"/>
</dbReference>
<dbReference type="InterPro" id="IPR052075">
    <property type="entry name" value="Heme_exporter_D"/>
</dbReference>
<dbReference type="NCBIfam" id="TIGR03141">
    <property type="entry name" value="cytochro_ccmD"/>
    <property type="match status" value="1"/>
</dbReference>
<dbReference type="PANTHER" id="PTHR37531">
    <property type="entry name" value="HEME EXPORTER PROTEIN D"/>
    <property type="match status" value="1"/>
</dbReference>
<dbReference type="PANTHER" id="PTHR37531:SF1">
    <property type="entry name" value="HEME EXPORTER PROTEIN D"/>
    <property type="match status" value="1"/>
</dbReference>
<dbReference type="Pfam" id="PF04995">
    <property type="entry name" value="CcmD"/>
    <property type="match status" value="1"/>
</dbReference>
<protein>
    <recommendedName>
        <fullName>Heme exporter protein D</fullName>
    </recommendedName>
    <alternativeName>
        <fullName>Cytochrome c-type biogenesis protein CcmD</fullName>
    </alternativeName>
</protein>
<feature type="chain" id="PRO_0000287760" description="Heme exporter protein D">
    <location>
        <begin position="1"/>
        <end position="58"/>
    </location>
</feature>
<feature type="transmembrane region" description="Helical" evidence="1">
    <location>
        <begin position="19"/>
        <end position="39"/>
    </location>
</feature>
<reference key="1">
    <citation type="journal article" date="2000" name="Nature">
        <title>Complete genome sequence of Pseudomonas aeruginosa PAO1, an opportunistic pathogen.</title>
        <authorList>
            <person name="Stover C.K."/>
            <person name="Pham X.-Q.T."/>
            <person name="Erwin A.L."/>
            <person name="Mizoguchi S.D."/>
            <person name="Warrener P."/>
            <person name="Hickey M.J."/>
            <person name="Brinkman F.S.L."/>
            <person name="Hufnagle W.O."/>
            <person name="Kowalik D.J."/>
            <person name="Lagrou M."/>
            <person name="Garber R.L."/>
            <person name="Goltry L."/>
            <person name="Tolentino E."/>
            <person name="Westbrock-Wadman S."/>
            <person name="Yuan Y."/>
            <person name="Brody L.L."/>
            <person name="Coulter S.N."/>
            <person name="Folger K.R."/>
            <person name="Kas A."/>
            <person name="Larbig K."/>
            <person name="Lim R.M."/>
            <person name="Smith K.A."/>
            <person name="Spencer D.H."/>
            <person name="Wong G.K.-S."/>
            <person name="Wu Z."/>
            <person name="Paulsen I.T."/>
            <person name="Reizer J."/>
            <person name="Saier M.H. Jr."/>
            <person name="Hancock R.E.W."/>
            <person name="Lory S."/>
            <person name="Olson M.V."/>
        </authorList>
    </citation>
    <scope>NUCLEOTIDE SEQUENCE [LARGE SCALE GENOMIC DNA]</scope>
    <source>
        <strain>ATCC 15692 / DSM 22644 / CIP 104116 / JCM 14847 / LMG 12228 / 1C / PRS 101 / PAO1</strain>
    </source>
</reference>